<accession>Q9WY54</accession>
<comment type="function">
    <text evidence="1">The glycine cleavage system catalyzes the degradation of glycine.</text>
</comment>
<comment type="catalytic activity">
    <reaction evidence="1">
        <text>N(6)-[(R)-S(8)-aminomethyldihydrolipoyl]-L-lysyl-[protein] + (6S)-5,6,7,8-tetrahydrofolate = N(6)-[(R)-dihydrolipoyl]-L-lysyl-[protein] + (6R)-5,10-methylene-5,6,7,8-tetrahydrofolate + NH4(+)</text>
        <dbReference type="Rhea" id="RHEA:16945"/>
        <dbReference type="Rhea" id="RHEA-COMP:10475"/>
        <dbReference type="Rhea" id="RHEA-COMP:10492"/>
        <dbReference type="ChEBI" id="CHEBI:15636"/>
        <dbReference type="ChEBI" id="CHEBI:28938"/>
        <dbReference type="ChEBI" id="CHEBI:57453"/>
        <dbReference type="ChEBI" id="CHEBI:83100"/>
        <dbReference type="ChEBI" id="CHEBI:83143"/>
        <dbReference type="EC" id="2.1.2.10"/>
    </reaction>
</comment>
<comment type="subunit">
    <text evidence="1">The glycine cleavage system is composed of four proteins: P, T, L and H.</text>
</comment>
<comment type="similarity">
    <text evidence="1">Belongs to the GcvT family.</text>
</comment>
<gene>
    <name evidence="1" type="primary">gcvT</name>
    <name type="ordered locus">TM_0211</name>
</gene>
<feature type="chain" id="PRO_0000122610" description="Aminomethyltransferase">
    <location>
        <begin position="1"/>
        <end position="364"/>
    </location>
</feature>
<feature type="helix" evidence="4">
    <location>
        <begin position="7"/>
        <end position="12"/>
    </location>
</feature>
<feature type="strand" evidence="4">
    <location>
        <begin position="16"/>
        <end position="20"/>
    </location>
</feature>
<feature type="strand" evidence="4">
    <location>
        <begin position="23"/>
        <end position="30"/>
    </location>
</feature>
<feature type="helix" evidence="4">
    <location>
        <begin position="32"/>
        <end position="41"/>
    </location>
</feature>
<feature type="strand" evidence="4">
    <location>
        <begin position="44"/>
        <end position="47"/>
    </location>
</feature>
<feature type="strand" evidence="4">
    <location>
        <begin position="51"/>
        <end position="58"/>
    </location>
</feature>
<feature type="helix" evidence="4">
    <location>
        <begin position="61"/>
        <end position="68"/>
    </location>
</feature>
<feature type="strand" evidence="4">
    <location>
        <begin position="69"/>
        <end position="71"/>
    </location>
</feature>
<feature type="strand" evidence="4">
    <location>
        <begin position="80"/>
        <end position="87"/>
    </location>
</feature>
<feature type="strand" evidence="4">
    <location>
        <begin position="93"/>
        <end position="103"/>
    </location>
</feature>
<feature type="strand" evidence="4">
    <location>
        <begin position="106"/>
        <end position="111"/>
    </location>
</feature>
<feature type="helix" evidence="4">
    <location>
        <begin position="113"/>
        <end position="115"/>
    </location>
</feature>
<feature type="helix" evidence="4">
    <location>
        <begin position="116"/>
        <end position="124"/>
    </location>
</feature>
<feature type="strand" evidence="4">
    <location>
        <begin position="133"/>
        <end position="136"/>
    </location>
</feature>
<feature type="helix" evidence="4">
    <location>
        <begin position="138"/>
        <end position="140"/>
    </location>
</feature>
<feature type="strand" evidence="4">
    <location>
        <begin position="141"/>
        <end position="148"/>
    </location>
</feature>
<feature type="helix" evidence="4">
    <location>
        <begin position="151"/>
        <end position="155"/>
    </location>
</feature>
<feature type="helix" evidence="4">
    <location>
        <begin position="156"/>
        <end position="158"/>
    </location>
</feature>
<feature type="strand" evidence="4">
    <location>
        <begin position="159"/>
        <end position="161"/>
    </location>
</feature>
<feature type="helix" evidence="3">
    <location>
        <begin position="163"/>
        <end position="165"/>
    </location>
</feature>
<feature type="strand" evidence="4">
    <location>
        <begin position="170"/>
        <end position="176"/>
    </location>
</feature>
<feature type="strand" evidence="4">
    <location>
        <begin position="179"/>
        <end position="185"/>
    </location>
</feature>
<feature type="strand" evidence="4">
    <location>
        <begin position="188"/>
        <end position="199"/>
    </location>
</feature>
<feature type="helix" evidence="4">
    <location>
        <begin position="200"/>
        <end position="202"/>
    </location>
</feature>
<feature type="helix" evidence="4">
    <location>
        <begin position="203"/>
        <end position="217"/>
    </location>
</feature>
<feature type="strand" evidence="2">
    <location>
        <begin position="220"/>
        <end position="222"/>
    </location>
</feature>
<feature type="helix" evidence="4">
    <location>
        <begin position="224"/>
        <end position="233"/>
    </location>
</feature>
<feature type="turn" evidence="4">
    <location>
        <begin position="239"/>
        <end position="241"/>
    </location>
</feature>
<feature type="helix" evidence="4">
    <location>
        <begin position="249"/>
        <end position="252"/>
    </location>
</feature>
<feature type="helix" evidence="4">
    <location>
        <begin position="255"/>
        <end position="257"/>
    </location>
</feature>
<feature type="helix" evidence="4">
    <location>
        <begin position="267"/>
        <end position="275"/>
    </location>
</feature>
<feature type="strand" evidence="4">
    <location>
        <begin position="279"/>
        <end position="289"/>
    </location>
</feature>
<feature type="strand" evidence="4">
    <location>
        <begin position="297"/>
        <end position="300"/>
    </location>
</feature>
<feature type="strand" evidence="4">
    <location>
        <begin position="303"/>
        <end position="314"/>
    </location>
</feature>
<feature type="turn" evidence="4">
    <location>
        <begin position="315"/>
        <end position="318"/>
    </location>
</feature>
<feature type="strand" evidence="4">
    <location>
        <begin position="319"/>
        <end position="327"/>
    </location>
</feature>
<feature type="strand" evidence="4">
    <location>
        <begin position="335"/>
        <end position="340"/>
    </location>
</feature>
<feature type="turn" evidence="4">
    <location>
        <begin position="341"/>
        <end position="343"/>
    </location>
</feature>
<feature type="strand" evidence="4">
    <location>
        <begin position="344"/>
        <end position="351"/>
    </location>
</feature>
<dbReference type="EC" id="2.1.2.10" evidence="1"/>
<dbReference type="EMBL" id="AE000512">
    <property type="protein sequence ID" value="AAD35303.1"/>
    <property type="molecule type" value="Genomic_DNA"/>
</dbReference>
<dbReference type="PIR" id="E72403">
    <property type="entry name" value="E72403"/>
</dbReference>
<dbReference type="RefSeq" id="NP_228026.1">
    <property type="nucleotide sequence ID" value="NC_000853.1"/>
</dbReference>
<dbReference type="RefSeq" id="WP_004082884.1">
    <property type="nucleotide sequence ID" value="NC_000853.1"/>
</dbReference>
<dbReference type="PDB" id="1WOO">
    <property type="method" value="X-ray"/>
    <property type="resolution" value="2.40 A"/>
    <property type="chains" value="A=1-364"/>
</dbReference>
<dbReference type="PDB" id="1WOP">
    <property type="method" value="X-ray"/>
    <property type="resolution" value="2.00 A"/>
    <property type="chains" value="A=1-364"/>
</dbReference>
<dbReference type="PDB" id="1WOR">
    <property type="method" value="X-ray"/>
    <property type="resolution" value="1.95 A"/>
    <property type="chains" value="A=1-364"/>
</dbReference>
<dbReference type="PDB" id="1WOS">
    <property type="method" value="X-ray"/>
    <property type="resolution" value="1.84 A"/>
    <property type="chains" value="A=1-364"/>
</dbReference>
<dbReference type="PDBsum" id="1WOO"/>
<dbReference type="PDBsum" id="1WOP"/>
<dbReference type="PDBsum" id="1WOR"/>
<dbReference type="PDBsum" id="1WOS"/>
<dbReference type="SMR" id="Q9WY54"/>
<dbReference type="FunCoup" id="Q9WY54">
    <property type="interactions" value="332"/>
</dbReference>
<dbReference type="STRING" id="243274.TM_0211"/>
<dbReference type="DrugBank" id="DB03256">
    <property type="generic name" value="(6R)-Folinic acid"/>
</dbReference>
<dbReference type="DrugBank" id="DB03760">
    <property type="generic name" value="Dihydrolipoic Acid"/>
</dbReference>
<dbReference type="PaxDb" id="243274-THEMA_03670"/>
<dbReference type="EnsemblBacteria" id="AAD35303">
    <property type="protein sequence ID" value="AAD35303"/>
    <property type="gene ID" value="TM_0211"/>
</dbReference>
<dbReference type="KEGG" id="tma:TM0211"/>
<dbReference type="KEGG" id="tmi:THEMA_03670"/>
<dbReference type="KEGG" id="tmm:Tmari_0209"/>
<dbReference type="KEGG" id="tmw:THMA_0218"/>
<dbReference type="eggNOG" id="COG0404">
    <property type="taxonomic scope" value="Bacteria"/>
</dbReference>
<dbReference type="InParanoid" id="Q9WY54"/>
<dbReference type="OrthoDB" id="9774591at2"/>
<dbReference type="BRENDA" id="1.4.1.27">
    <property type="organism ID" value="6331"/>
</dbReference>
<dbReference type="EvolutionaryTrace" id="Q9WY54"/>
<dbReference type="Proteomes" id="UP000008183">
    <property type="component" value="Chromosome"/>
</dbReference>
<dbReference type="GO" id="GO:0005829">
    <property type="term" value="C:cytosol"/>
    <property type="evidence" value="ECO:0000318"/>
    <property type="project" value="GO_Central"/>
</dbReference>
<dbReference type="GO" id="GO:0005960">
    <property type="term" value="C:glycine cleavage complex"/>
    <property type="evidence" value="ECO:0007669"/>
    <property type="project" value="InterPro"/>
</dbReference>
<dbReference type="GO" id="GO:0004047">
    <property type="term" value="F:aminomethyltransferase activity"/>
    <property type="evidence" value="ECO:0007669"/>
    <property type="project" value="UniProtKB-UniRule"/>
</dbReference>
<dbReference type="GO" id="GO:0008483">
    <property type="term" value="F:transaminase activity"/>
    <property type="evidence" value="ECO:0007669"/>
    <property type="project" value="UniProtKB-KW"/>
</dbReference>
<dbReference type="GO" id="GO:0019464">
    <property type="term" value="P:glycine decarboxylation via glycine cleavage system"/>
    <property type="evidence" value="ECO:0007669"/>
    <property type="project" value="UniProtKB-UniRule"/>
</dbReference>
<dbReference type="FunFam" id="2.40.30.110:FF:000003">
    <property type="entry name" value="Aminomethyltransferase"/>
    <property type="match status" value="1"/>
</dbReference>
<dbReference type="FunFam" id="3.30.70.1400:FF:000001">
    <property type="entry name" value="Aminomethyltransferase"/>
    <property type="match status" value="1"/>
</dbReference>
<dbReference type="FunFam" id="4.10.1250.10:FF:000001">
    <property type="entry name" value="Aminomethyltransferase"/>
    <property type="match status" value="1"/>
</dbReference>
<dbReference type="Gene3D" id="2.40.30.110">
    <property type="entry name" value="Aminomethyltransferase beta-barrel domains"/>
    <property type="match status" value="1"/>
</dbReference>
<dbReference type="Gene3D" id="3.30.70.1400">
    <property type="entry name" value="Aminomethyltransferase beta-barrel domains"/>
    <property type="match status" value="1"/>
</dbReference>
<dbReference type="Gene3D" id="4.10.1250.10">
    <property type="entry name" value="Aminomethyltransferase fragment"/>
    <property type="match status" value="1"/>
</dbReference>
<dbReference type="Gene3D" id="3.30.1360.120">
    <property type="entry name" value="Probable tRNA modification gtpase trme, domain 1"/>
    <property type="match status" value="1"/>
</dbReference>
<dbReference type="HAMAP" id="MF_00259">
    <property type="entry name" value="GcvT"/>
    <property type="match status" value="1"/>
</dbReference>
<dbReference type="InterPro" id="IPR006223">
    <property type="entry name" value="GCS_T"/>
</dbReference>
<dbReference type="InterPro" id="IPR022903">
    <property type="entry name" value="GCS_T_bac"/>
</dbReference>
<dbReference type="InterPro" id="IPR013977">
    <property type="entry name" value="GCST_C"/>
</dbReference>
<dbReference type="InterPro" id="IPR006222">
    <property type="entry name" value="GCV_T_N"/>
</dbReference>
<dbReference type="InterPro" id="IPR028896">
    <property type="entry name" value="GcvT/YgfZ/DmdA"/>
</dbReference>
<dbReference type="InterPro" id="IPR029043">
    <property type="entry name" value="GcvT/YgfZ_C"/>
</dbReference>
<dbReference type="InterPro" id="IPR027266">
    <property type="entry name" value="TrmE/GcvT_dom1"/>
</dbReference>
<dbReference type="NCBIfam" id="TIGR00528">
    <property type="entry name" value="gcvT"/>
    <property type="match status" value="1"/>
</dbReference>
<dbReference type="NCBIfam" id="NF001567">
    <property type="entry name" value="PRK00389.1"/>
    <property type="match status" value="1"/>
</dbReference>
<dbReference type="PANTHER" id="PTHR43757">
    <property type="entry name" value="AMINOMETHYLTRANSFERASE"/>
    <property type="match status" value="1"/>
</dbReference>
<dbReference type="PANTHER" id="PTHR43757:SF2">
    <property type="entry name" value="AMINOMETHYLTRANSFERASE, MITOCHONDRIAL"/>
    <property type="match status" value="1"/>
</dbReference>
<dbReference type="Pfam" id="PF01571">
    <property type="entry name" value="GCV_T"/>
    <property type="match status" value="1"/>
</dbReference>
<dbReference type="Pfam" id="PF08669">
    <property type="entry name" value="GCV_T_C"/>
    <property type="match status" value="1"/>
</dbReference>
<dbReference type="PIRSF" id="PIRSF006487">
    <property type="entry name" value="GcvT"/>
    <property type="match status" value="1"/>
</dbReference>
<dbReference type="SUPFAM" id="SSF101790">
    <property type="entry name" value="Aminomethyltransferase beta-barrel domain"/>
    <property type="match status" value="1"/>
</dbReference>
<dbReference type="SUPFAM" id="SSF103025">
    <property type="entry name" value="Folate-binding domain"/>
    <property type="match status" value="1"/>
</dbReference>
<evidence type="ECO:0000255" key="1">
    <source>
        <dbReference type="HAMAP-Rule" id="MF_00259"/>
    </source>
</evidence>
<evidence type="ECO:0007829" key="2">
    <source>
        <dbReference type="PDB" id="1WOO"/>
    </source>
</evidence>
<evidence type="ECO:0007829" key="3">
    <source>
        <dbReference type="PDB" id="1WOP"/>
    </source>
</evidence>
<evidence type="ECO:0007829" key="4">
    <source>
        <dbReference type="PDB" id="1WOS"/>
    </source>
</evidence>
<proteinExistence type="evidence at protein level"/>
<sequence length="364" mass="40333">MKRTPLFEKHVELGAKMVDFAGWEMPLYYTSIFEEVMAVRKSVGMFDVSHMGEFLVKGPEAVSFIDFLITNDFSSLPDGKAIYSVMCNENGGIIDDLVVYKVSPDEALMVVNAANIEKDFNWIKSHSKNFDVEVSNISDTTALIAFQGPKAQETLQELVEDGLEEIAYYSFRKSIVAGVETLVSRTGYTGEDGFELMLEAKNAPKVWDALMNLLRKIDGRPAGLGARDVCRLEATYLLYGQDMDENTNPFEVGLSWVVKLNKDFVGKEALLKAKEKVERKLVALELSGKRIARKGYEVLKNGERVGEITSGNFSPTLGKSIALALVSKSVKIGDQLGVVFPGGKLVEALVVKKPFYRGSVRREV</sequence>
<keyword id="KW-0002">3D-structure</keyword>
<keyword id="KW-0032">Aminotransferase</keyword>
<keyword id="KW-1185">Reference proteome</keyword>
<keyword id="KW-0808">Transferase</keyword>
<name>GCST_THEMA</name>
<protein>
    <recommendedName>
        <fullName evidence="1">Aminomethyltransferase</fullName>
        <ecNumber evidence="1">2.1.2.10</ecNumber>
    </recommendedName>
    <alternativeName>
        <fullName evidence="1">Glycine cleavage system T protein</fullName>
    </alternativeName>
</protein>
<reference key="1">
    <citation type="journal article" date="1999" name="Nature">
        <title>Evidence for lateral gene transfer between Archaea and Bacteria from genome sequence of Thermotoga maritima.</title>
        <authorList>
            <person name="Nelson K.E."/>
            <person name="Clayton R.A."/>
            <person name="Gill S.R."/>
            <person name="Gwinn M.L."/>
            <person name="Dodson R.J."/>
            <person name="Haft D.H."/>
            <person name="Hickey E.K."/>
            <person name="Peterson J.D."/>
            <person name="Nelson W.C."/>
            <person name="Ketchum K.A."/>
            <person name="McDonald L.A."/>
            <person name="Utterback T.R."/>
            <person name="Malek J.A."/>
            <person name="Linher K.D."/>
            <person name="Garrett M.M."/>
            <person name="Stewart A.M."/>
            <person name="Cotton M.D."/>
            <person name="Pratt M.S."/>
            <person name="Phillips C.A."/>
            <person name="Richardson D.L."/>
            <person name="Heidelberg J.F."/>
            <person name="Sutton G.G."/>
            <person name="Fleischmann R.D."/>
            <person name="Eisen J.A."/>
            <person name="White O."/>
            <person name="Salzberg S.L."/>
            <person name="Smith H.O."/>
            <person name="Venter J.C."/>
            <person name="Fraser C.M."/>
        </authorList>
    </citation>
    <scope>NUCLEOTIDE SEQUENCE [LARGE SCALE GENOMIC DNA]</scope>
    <source>
        <strain>ATCC 43589 / DSM 3109 / JCM 10099 / NBRC 100826 / MSB8</strain>
    </source>
</reference>
<organism>
    <name type="scientific">Thermotoga maritima (strain ATCC 43589 / DSM 3109 / JCM 10099 / NBRC 100826 / MSB8)</name>
    <dbReference type="NCBI Taxonomy" id="243274"/>
    <lineage>
        <taxon>Bacteria</taxon>
        <taxon>Thermotogati</taxon>
        <taxon>Thermotogota</taxon>
        <taxon>Thermotogae</taxon>
        <taxon>Thermotogales</taxon>
        <taxon>Thermotogaceae</taxon>
        <taxon>Thermotoga</taxon>
    </lineage>
</organism>